<sequence length="367" mass="40700">MKSLFQRRASKVRETEAMNAPVPNNQKAELLQKVVEHVDITSYDARPIIDSMRKMSFSSRDTARAADIFNMALADKGCSTWLILAGSTSAGGCMHVYRDMVKNGMIDAVVATGASIVDMDFFEALGFKHYQAAGPVDDNVLRDNYIDRIYDTYIDEEELQACDHTILEICNKLEPRGYSSREFIWEMGKWLAEGNAKKEGSLIQTAYEEGVPIFCPAFVDSSAGFGLVKHQKEKIAEKKPYLMIDAVADFRELTDVKIAAGTTGLFMVGGGVPKNFAQDTVVCAEILGVEADMHKYAIQITVADVRDGACSSSTLKEAASWGKVSTTYEQMVFAEATTVVPLIASDAYWRKAWEGREKPRWNKLFGK</sequence>
<keyword id="KW-1185">Reference proteome</keyword>
<keyword id="KW-0808">Transferase</keyword>
<reference key="1">
    <citation type="journal article" date="2001" name="Proc. Natl. Acad. Sci. U.S.A.">
        <title>Complete genome sequence of Caulobacter crescentus.</title>
        <authorList>
            <person name="Nierman W.C."/>
            <person name="Feldblyum T.V."/>
            <person name="Laub M.T."/>
            <person name="Paulsen I.T."/>
            <person name="Nelson K.E."/>
            <person name="Eisen J.A."/>
            <person name="Heidelberg J.F."/>
            <person name="Alley M.R.K."/>
            <person name="Ohta N."/>
            <person name="Maddock J.R."/>
            <person name="Potocka I."/>
            <person name="Nelson W.C."/>
            <person name="Newton A."/>
            <person name="Stephens C."/>
            <person name="Phadke N.D."/>
            <person name="Ely B."/>
            <person name="DeBoy R.T."/>
            <person name="Dodson R.J."/>
            <person name="Durkin A.S."/>
            <person name="Gwinn M.L."/>
            <person name="Haft D.H."/>
            <person name="Kolonay J.F."/>
            <person name="Smit J."/>
            <person name="Craven M.B."/>
            <person name="Khouri H.M."/>
            <person name="Shetty J."/>
            <person name="Berry K.J."/>
            <person name="Utterback T.R."/>
            <person name="Tran K."/>
            <person name="Wolf A.M."/>
            <person name="Vamathevan J.J."/>
            <person name="Ermolaeva M.D."/>
            <person name="White O."/>
            <person name="Salzberg S.L."/>
            <person name="Venter J.C."/>
            <person name="Shapiro L."/>
            <person name="Fraser C.M."/>
        </authorList>
    </citation>
    <scope>NUCLEOTIDE SEQUENCE [LARGE SCALE GENOMIC DNA]</scope>
    <source>
        <strain>ATCC 19089 / CIP 103742 / CB 15</strain>
    </source>
</reference>
<accession>Q9AB72</accession>
<proteinExistence type="inferred from homology"/>
<feature type="chain" id="PRO_0000134513" description="Deoxyhypusine synthase-like protein">
    <location>
        <begin position="1"/>
        <end position="367"/>
    </location>
</feature>
<feature type="region of interest" description="Disordered" evidence="1">
    <location>
        <begin position="1"/>
        <end position="23"/>
    </location>
</feature>
<comment type="similarity">
    <text evidence="2">Belongs to the deoxyhypusine synthase family.</text>
</comment>
<name>DHSL_CAUVC</name>
<evidence type="ECO:0000256" key="1">
    <source>
        <dbReference type="SAM" id="MobiDB-lite"/>
    </source>
</evidence>
<evidence type="ECO:0000305" key="2"/>
<organism>
    <name type="scientific">Caulobacter vibrioides (strain ATCC 19089 / CIP 103742 / CB 15)</name>
    <name type="common">Caulobacter crescentus</name>
    <dbReference type="NCBI Taxonomy" id="190650"/>
    <lineage>
        <taxon>Bacteria</taxon>
        <taxon>Pseudomonadati</taxon>
        <taxon>Pseudomonadota</taxon>
        <taxon>Alphaproteobacteria</taxon>
        <taxon>Caulobacterales</taxon>
        <taxon>Caulobacteraceae</taxon>
        <taxon>Caulobacter</taxon>
    </lineage>
</organism>
<gene>
    <name type="ordered locus">CC_0359</name>
</gene>
<dbReference type="EC" id="2.5.-.-"/>
<dbReference type="EMBL" id="AE005673">
    <property type="protein sequence ID" value="AAK22346.1"/>
    <property type="molecule type" value="Genomic_DNA"/>
</dbReference>
<dbReference type="PIR" id="F87293">
    <property type="entry name" value="F87293"/>
</dbReference>
<dbReference type="RefSeq" id="NP_419178.1">
    <property type="nucleotide sequence ID" value="NC_002696.2"/>
</dbReference>
<dbReference type="SMR" id="Q9AB72"/>
<dbReference type="STRING" id="190650.CC_0359"/>
<dbReference type="EnsemblBacteria" id="AAK22346">
    <property type="protein sequence ID" value="AAK22346"/>
    <property type="gene ID" value="CC_0359"/>
</dbReference>
<dbReference type="KEGG" id="ccr:CC_0359"/>
<dbReference type="PATRIC" id="fig|190650.5.peg.362"/>
<dbReference type="eggNOG" id="COG1899">
    <property type="taxonomic scope" value="Bacteria"/>
</dbReference>
<dbReference type="HOGENOM" id="CLU_039781_1_0_5"/>
<dbReference type="BioCyc" id="CAULO:CC0359-MONOMER"/>
<dbReference type="Proteomes" id="UP000001816">
    <property type="component" value="Chromosome"/>
</dbReference>
<dbReference type="GO" id="GO:0005737">
    <property type="term" value="C:cytoplasm"/>
    <property type="evidence" value="ECO:0007669"/>
    <property type="project" value="TreeGrafter"/>
</dbReference>
<dbReference type="GO" id="GO:0034038">
    <property type="term" value="F:deoxyhypusine synthase activity"/>
    <property type="evidence" value="ECO:0007669"/>
    <property type="project" value="TreeGrafter"/>
</dbReference>
<dbReference type="Gene3D" id="3.40.910.10">
    <property type="entry name" value="Deoxyhypusine synthase"/>
    <property type="match status" value="1"/>
</dbReference>
<dbReference type="HAMAP" id="MF_00640">
    <property type="entry name" value="DHS_like"/>
    <property type="match status" value="1"/>
</dbReference>
<dbReference type="InterPro" id="IPR002773">
    <property type="entry name" value="Deoxyhypusine_synthase"/>
</dbReference>
<dbReference type="InterPro" id="IPR023496">
    <property type="entry name" value="Deoxyhypusine_synthase-like"/>
</dbReference>
<dbReference type="InterPro" id="IPR036982">
    <property type="entry name" value="Deoxyhypusine_synthase_sf"/>
</dbReference>
<dbReference type="InterPro" id="IPR029035">
    <property type="entry name" value="DHS-like_NAD/FAD-binding_dom"/>
</dbReference>
<dbReference type="NCBIfam" id="NF002699">
    <property type="entry name" value="PRK02492.1"/>
    <property type="match status" value="1"/>
</dbReference>
<dbReference type="PANTHER" id="PTHR11703">
    <property type="entry name" value="DEOXYHYPUSINE SYNTHASE"/>
    <property type="match status" value="1"/>
</dbReference>
<dbReference type="PANTHER" id="PTHR11703:SF2">
    <property type="entry name" value="DEOXYHYPUSINE SYNTHASE-LIKE PROTEIN"/>
    <property type="match status" value="1"/>
</dbReference>
<dbReference type="Pfam" id="PF01916">
    <property type="entry name" value="DS"/>
    <property type="match status" value="1"/>
</dbReference>
<dbReference type="SUPFAM" id="SSF52467">
    <property type="entry name" value="DHS-like NAD/FAD-binding domain"/>
    <property type="match status" value="1"/>
</dbReference>
<protein>
    <recommendedName>
        <fullName>Deoxyhypusine synthase-like protein</fullName>
        <ecNumber>2.5.-.-</ecNumber>
    </recommendedName>
</protein>